<comment type="function">
    <text evidence="2 7 8">E3 ubiquitin-protein ligase that plays a role in different processes including cell differentiation, receptor recycling or regulation of inflammation (PubMed:28593998, PubMed:37158982). Mediates the ubiquitination of AKT1 and GLUL, thereby playing a role in neuron cells differentiation. Plays a role in the establishment and maintenance of neuronal transmission and plasticity. Regulates Schwann cells differentiation by mediating ubiquitination of GLUL (PubMed:20107048). Promotes neurodegeneration by mediating 'Lys-48'-linked polyubiquitination and subsequent degradation of AKT1 in axons: degradation of AKT1 prevents AKT1-mediated phosphorylation of GSK3B, leading to GSK3B activation and phosphorylation of DPYSL2/CRMP2 followed by destabilization of microtubule assembly in axons (PubMed:22057101). Ubiquitinates the Na(+)/K(+) ATPase alpha-1 subunit/ATP1A1 and thereby influences its endocytosis and/or degradation. Controls ligand-induced EGFR signaling via mediating receptor ubiquitination and recruitment of the ESCRT machinery. Acts as a negative feedback mechanism controlling TLR3 trafficking by mediating TLR3 'Lys-63'-linked polyubiquitination to reduce type I IFN production. Modulates inflammation by promoting caveolin-1/CAV1 ubiquitination and degradation to regulate TLR4-activated immune response.</text>
</comment>
<comment type="catalytic activity">
    <reaction evidence="2">
        <text>S-ubiquitinyl-[E2 ubiquitin-conjugating enzyme]-L-cysteine + [acceptor protein]-L-lysine = [E2 ubiquitin-conjugating enzyme]-L-cysteine + N(6)-ubiquitinyl-[acceptor protein]-L-lysine.</text>
        <dbReference type="EC" id="2.3.2.27"/>
    </reaction>
</comment>
<comment type="pathway">
    <text evidence="2">Protein modification; protein ubiquitination.</text>
</comment>
<comment type="subunit">
    <text evidence="2 6 7 8">Interacts with AKT1, GLUL and TUBB2A (PubMed:19737534, PubMed:20107048, PubMed:22057101). Interacts with ZNRF2. Interacts (via its RING domain) with UBE2N. Interacts (when phosphorylated) with YWHAE (By similarity).</text>
</comment>
<comment type="subcellular location">
    <subcellularLocation>
        <location>Endosome</location>
    </subcellularLocation>
    <subcellularLocation>
        <location>Lysosome</location>
    </subcellularLocation>
    <subcellularLocation>
        <location>Membrane</location>
        <topology>Peripheral membrane protein</topology>
    </subcellularLocation>
    <subcellularLocation>
        <location evidence="11">Cytoplasmic vesicle</location>
        <location evidence="11">Secretory vesicle</location>
        <location evidence="11">Synaptic vesicle membrane</location>
        <topology evidence="11">Peripheral membrane protein</topology>
    </subcellularLocation>
    <text>Associated with synaptic vesicle membranes in neurons.</text>
</comment>
<comment type="domain">
    <text evidence="1">The RING-type zinc finger domain is required for E3 ligase activity.</text>
</comment>
<comment type="PTM">
    <text evidence="2">N-myristoylation targets ZNRF1 to intracellular membranes.</text>
</comment>
<comment type="PTM">
    <text evidence="2">Phosphorylated by SRC at Tyr-103; leading to 'Lys-63'-linked ubiquitination of TLR3, lysosomal trafficking and degradation.</text>
</comment>
<comment type="disruption phenotype">
    <text evidence="9 10">ZNRF1-deficient mice are more resistant to infection by encephalomyocarditis virus (ECMV) and SARS-CoV-2 with enhanced type I interferon production (PubMed:37158982). However, the display exacerbated lung barrier damage triggered by antiviral immunity, leading to enhanced susceptibility to respiratory bacterial superinfections. Mice are also are more resistant to LPS and CLP-induced sepsis (PubMed:28593998).</text>
</comment>
<evidence type="ECO:0000250" key="1"/>
<evidence type="ECO:0000250" key="2">
    <source>
        <dbReference type="UniProtKB" id="Q8ND25"/>
    </source>
</evidence>
<evidence type="ECO:0000255" key="3"/>
<evidence type="ECO:0000255" key="4">
    <source>
        <dbReference type="PROSITE-ProRule" id="PRU00175"/>
    </source>
</evidence>
<evidence type="ECO:0000256" key="5">
    <source>
        <dbReference type="SAM" id="MobiDB-lite"/>
    </source>
</evidence>
<evidence type="ECO:0000269" key="6">
    <source>
    </source>
</evidence>
<evidence type="ECO:0000269" key="7">
    <source>
    </source>
</evidence>
<evidence type="ECO:0000269" key="8">
    <source>
    </source>
</evidence>
<evidence type="ECO:0000269" key="9">
    <source>
    </source>
</evidence>
<evidence type="ECO:0000269" key="10">
    <source>
    </source>
</evidence>
<evidence type="ECO:0000305" key="11"/>
<evidence type="ECO:0007744" key="12">
    <source>
    </source>
</evidence>
<organism>
    <name type="scientific">Mus musculus</name>
    <name type="common">Mouse</name>
    <dbReference type="NCBI Taxonomy" id="10090"/>
    <lineage>
        <taxon>Eukaryota</taxon>
        <taxon>Metazoa</taxon>
        <taxon>Chordata</taxon>
        <taxon>Craniata</taxon>
        <taxon>Vertebrata</taxon>
        <taxon>Euteleostomi</taxon>
        <taxon>Mammalia</taxon>
        <taxon>Eutheria</taxon>
        <taxon>Euarchontoglires</taxon>
        <taxon>Glires</taxon>
        <taxon>Rodentia</taxon>
        <taxon>Myomorpha</taxon>
        <taxon>Muroidea</taxon>
        <taxon>Muridae</taxon>
        <taxon>Murinae</taxon>
        <taxon>Mus</taxon>
        <taxon>Mus</taxon>
    </lineage>
</organism>
<proteinExistence type="evidence at protein level"/>
<keyword id="KW-0968">Cytoplasmic vesicle</keyword>
<keyword id="KW-0967">Endosome</keyword>
<keyword id="KW-0449">Lipoprotein</keyword>
<keyword id="KW-0458">Lysosome</keyword>
<keyword id="KW-0472">Membrane</keyword>
<keyword id="KW-0479">Metal-binding</keyword>
<keyword id="KW-0519">Myristate</keyword>
<keyword id="KW-0597">Phosphoprotein</keyword>
<keyword id="KW-1185">Reference proteome</keyword>
<keyword id="KW-0770">Synapse</keyword>
<keyword id="KW-0808">Transferase</keyword>
<keyword id="KW-0832">Ubl conjugation</keyword>
<keyword id="KW-0833">Ubl conjugation pathway</keyword>
<keyword id="KW-0862">Zinc</keyword>
<keyword id="KW-0863">Zinc-finger</keyword>
<dbReference type="EC" id="2.3.2.27"/>
<dbReference type="EMBL" id="AF378525">
    <property type="protein sequence ID" value="AAK69754.1"/>
    <property type="molecule type" value="mRNA"/>
</dbReference>
<dbReference type="EMBL" id="AK078819">
    <property type="protein sequence ID" value="BAC37410.1"/>
    <property type="molecule type" value="mRNA"/>
</dbReference>
<dbReference type="EMBL" id="AK079338">
    <property type="protein sequence ID" value="BAC37612.1"/>
    <property type="molecule type" value="mRNA"/>
</dbReference>
<dbReference type="EMBL" id="BC006765">
    <property type="protein sequence ID" value="AAH06765.1"/>
    <property type="molecule type" value="mRNA"/>
</dbReference>
<dbReference type="EMBL" id="BC086770">
    <property type="protein sequence ID" value="AAH86770.1"/>
    <property type="molecule type" value="mRNA"/>
</dbReference>
<dbReference type="CCDS" id="CCDS22676.1"/>
<dbReference type="RefSeq" id="NP_001162092.1">
    <property type="nucleotide sequence ID" value="NM_001168621.3"/>
</dbReference>
<dbReference type="RefSeq" id="NP_001162093.1">
    <property type="nucleotide sequence ID" value="NM_001168622.1"/>
</dbReference>
<dbReference type="RefSeq" id="NP_001162094.1">
    <property type="nucleotide sequence ID" value="NM_001168623.1"/>
</dbReference>
<dbReference type="RefSeq" id="NP_001350417.1">
    <property type="nucleotide sequence ID" value="NM_001363488.2"/>
</dbReference>
<dbReference type="RefSeq" id="NP_573469.1">
    <property type="nucleotide sequence ID" value="NM_133206.5"/>
</dbReference>
<dbReference type="RefSeq" id="XP_006530794.1">
    <property type="nucleotide sequence ID" value="XM_006530731.2"/>
</dbReference>
<dbReference type="RefSeq" id="XP_036009665.1">
    <property type="nucleotide sequence ID" value="XM_036153772.1"/>
</dbReference>
<dbReference type="RefSeq" id="XP_036009666.1">
    <property type="nucleotide sequence ID" value="XM_036153773.1"/>
</dbReference>
<dbReference type="RefSeq" id="XP_036009667.1">
    <property type="nucleotide sequence ID" value="XM_036153774.1"/>
</dbReference>
<dbReference type="SMR" id="Q91V17"/>
<dbReference type="BioGRID" id="228404">
    <property type="interactions" value="1"/>
</dbReference>
<dbReference type="CORUM" id="Q91V17"/>
<dbReference type="FunCoup" id="Q91V17">
    <property type="interactions" value="1887"/>
</dbReference>
<dbReference type="STRING" id="10090.ENSMUSP00000133309"/>
<dbReference type="iPTMnet" id="Q91V17"/>
<dbReference type="PhosphoSitePlus" id="Q91V17"/>
<dbReference type="jPOST" id="Q91V17"/>
<dbReference type="PaxDb" id="10090-ENSMUSP00000092799"/>
<dbReference type="ProteomicsDB" id="275102"/>
<dbReference type="Antibodypedia" id="30290">
    <property type="antibodies" value="161 antibodies from 26 providers"/>
</dbReference>
<dbReference type="DNASU" id="170737"/>
<dbReference type="Ensembl" id="ENSMUST00000095176.12">
    <property type="protein sequence ID" value="ENSMUSP00000092799.6"/>
    <property type="gene ID" value="ENSMUSG00000033545.15"/>
</dbReference>
<dbReference type="Ensembl" id="ENSMUST00000168428.8">
    <property type="protein sequence ID" value="ENSMUSP00000126684.2"/>
    <property type="gene ID" value="ENSMUSG00000033545.15"/>
</dbReference>
<dbReference type="Ensembl" id="ENSMUST00000172856.8">
    <property type="protein sequence ID" value="ENSMUSP00000133309.2"/>
    <property type="gene ID" value="ENSMUSG00000033545.15"/>
</dbReference>
<dbReference type="Ensembl" id="ENSMUST00000173506.8">
    <property type="protein sequence ID" value="ENSMUSP00000133993.2"/>
    <property type="gene ID" value="ENSMUSG00000033545.15"/>
</dbReference>
<dbReference type="GeneID" id="170737"/>
<dbReference type="KEGG" id="mmu:170737"/>
<dbReference type="UCSC" id="uc009nmk.2">
    <property type="organism name" value="mouse"/>
</dbReference>
<dbReference type="AGR" id="MGI:2177308"/>
<dbReference type="CTD" id="84937"/>
<dbReference type="MGI" id="MGI:2177308">
    <property type="gene designation" value="Znrf1"/>
</dbReference>
<dbReference type="VEuPathDB" id="HostDB:ENSMUSG00000033545"/>
<dbReference type="eggNOG" id="KOG0801">
    <property type="taxonomic scope" value="Eukaryota"/>
</dbReference>
<dbReference type="GeneTree" id="ENSGT00940000159278"/>
<dbReference type="HOGENOM" id="CLU_062700_0_1_1"/>
<dbReference type="InParanoid" id="Q91V17"/>
<dbReference type="OMA" id="TPYAHGN"/>
<dbReference type="OrthoDB" id="10057496at2759"/>
<dbReference type="PhylomeDB" id="Q91V17"/>
<dbReference type="TreeFam" id="TF317681"/>
<dbReference type="Reactome" id="R-MMU-983168">
    <property type="pathway name" value="Antigen processing: Ubiquitination &amp; Proteasome degradation"/>
</dbReference>
<dbReference type="UniPathway" id="UPA00143"/>
<dbReference type="BioGRID-ORCS" id="170737">
    <property type="hits" value="1 hit in 75 CRISPR screens"/>
</dbReference>
<dbReference type="ChiTaRS" id="Znrf1">
    <property type="organism name" value="mouse"/>
</dbReference>
<dbReference type="PRO" id="PR:Q91V17"/>
<dbReference type="Proteomes" id="UP000000589">
    <property type="component" value="Chromosome 8"/>
</dbReference>
<dbReference type="RNAct" id="Q91V17">
    <property type="molecule type" value="protein"/>
</dbReference>
<dbReference type="Bgee" id="ENSMUSG00000033545">
    <property type="expression patterns" value="Expressed in granulocyte and 268 other cell types or tissues"/>
</dbReference>
<dbReference type="ExpressionAtlas" id="Q91V17">
    <property type="expression patterns" value="baseline and differential"/>
</dbReference>
<dbReference type="GO" id="GO:0005829">
    <property type="term" value="C:cytosol"/>
    <property type="evidence" value="ECO:0000266"/>
    <property type="project" value="MGI"/>
</dbReference>
<dbReference type="GO" id="GO:0005768">
    <property type="term" value="C:endosome"/>
    <property type="evidence" value="ECO:0007669"/>
    <property type="project" value="UniProtKB-SubCell"/>
</dbReference>
<dbReference type="GO" id="GO:0005764">
    <property type="term" value="C:lysosome"/>
    <property type="evidence" value="ECO:0007669"/>
    <property type="project" value="UniProtKB-SubCell"/>
</dbReference>
<dbReference type="GO" id="GO:0016020">
    <property type="term" value="C:membrane"/>
    <property type="evidence" value="ECO:0000266"/>
    <property type="project" value="MGI"/>
</dbReference>
<dbReference type="GO" id="GO:0030672">
    <property type="term" value="C:synaptic vesicle membrane"/>
    <property type="evidence" value="ECO:0007669"/>
    <property type="project" value="UniProtKB-SubCell"/>
</dbReference>
<dbReference type="GO" id="GO:0061630">
    <property type="term" value="F:ubiquitin protein ligase activity"/>
    <property type="evidence" value="ECO:0000314"/>
    <property type="project" value="MGI"/>
</dbReference>
<dbReference type="GO" id="GO:0004842">
    <property type="term" value="F:ubiquitin-protein transferase activity"/>
    <property type="evidence" value="ECO:0000314"/>
    <property type="project" value="UniProtKB"/>
</dbReference>
<dbReference type="GO" id="GO:0008270">
    <property type="term" value="F:zinc ion binding"/>
    <property type="evidence" value="ECO:0007669"/>
    <property type="project" value="UniProtKB-KW"/>
</dbReference>
<dbReference type="GO" id="GO:0007010">
    <property type="term" value="P:cytoskeleton organization"/>
    <property type="evidence" value="ECO:0000304"/>
    <property type="project" value="UniProtKB"/>
</dbReference>
<dbReference type="GO" id="GO:0160177">
    <property type="term" value="P:positive regulation of autophagosome-lysosome fusion"/>
    <property type="evidence" value="ECO:0007669"/>
    <property type="project" value="Ensembl"/>
</dbReference>
<dbReference type="GO" id="GO:0034145">
    <property type="term" value="P:positive regulation of toll-like receptor 4 signaling pathway"/>
    <property type="evidence" value="ECO:0007669"/>
    <property type="project" value="Ensembl"/>
</dbReference>
<dbReference type="GO" id="GO:0043161">
    <property type="term" value="P:proteasome-mediated ubiquitin-dependent protein catabolic process"/>
    <property type="evidence" value="ECO:0000314"/>
    <property type="project" value="UniProtKB"/>
</dbReference>
<dbReference type="GO" id="GO:0070936">
    <property type="term" value="P:protein K48-linked ubiquitination"/>
    <property type="evidence" value="ECO:0000314"/>
    <property type="project" value="UniProtKB"/>
</dbReference>
<dbReference type="CDD" id="cd16695">
    <property type="entry name" value="mRING-CH-C4HC2H_ZNRF2"/>
    <property type="match status" value="1"/>
</dbReference>
<dbReference type="FunFam" id="3.30.40.10:FF:000235">
    <property type="entry name" value="E3 ubiquitin-protein ligase ZNRF1"/>
    <property type="match status" value="1"/>
</dbReference>
<dbReference type="Gene3D" id="3.30.40.10">
    <property type="entry name" value="Zinc/RING finger domain, C3HC4 (zinc finger)"/>
    <property type="match status" value="1"/>
</dbReference>
<dbReference type="InterPro" id="IPR001841">
    <property type="entry name" value="Znf_RING"/>
</dbReference>
<dbReference type="InterPro" id="IPR013083">
    <property type="entry name" value="Znf_RING/FYVE/PHD"/>
</dbReference>
<dbReference type="InterPro" id="IPR051878">
    <property type="entry name" value="ZNRF_ubiq-protein_ligase"/>
</dbReference>
<dbReference type="PANTHER" id="PTHR46661:SF2">
    <property type="entry name" value="E3 UBIQUITIN-PROTEIN LIGASE ZNRF1"/>
    <property type="match status" value="1"/>
</dbReference>
<dbReference type="PANTHER" id="PTHR46661">
    <property type="entry name" value="E3 UBIQUITIN-PROTEIN LIGASE ZNRF1-LIKE PROTEIN"/>
    <property type="match status" value="1"/>
</dbReference>
<dbReference type="Pfam" id="PF13639">
    <property type="entry name" value="zf-RING_2"/>
    <property type="match status" value="1"/>
</dbReference>
<dbReference type="SMART" id="SM00184">
    <property type="entry name" value="RING"/>
    <property type="match status" value="1"/>
</dbReference>
<dbReference type="SUPFAM" id="SSF57850">
    <property type="entry name" value="RING/U-box"/>
    <property type="match status" value="1"/>
</dbReference>
<dbReference type="PROSITE" id="PS50089">
    <property type="entry name" value="ZF_RING_2"/>
    <property type="match status" value="1"/>
</dbReference>
<feature type="initiator methionine" description="Removed" evidence="3">
    <location>
        <position position="1"/>
    </location>
</feature>
<feature type="chain" id="PRO_0000277800" description="E3 ubiquitin-protein ligase ZNRF1">
    <location>
        <begin position="2"/>
        <end position="227"/>
    </location>
</feature>
<feature type="zinc finger region" description="RING-type; atypical" evidence="4">
    <location>
        <begin position="184"/>
        <end position="225"/>
    </location>
</feature>
<feature type="region of interest" description="Disordered" evidence="5">
    <location>
        <begin position="1"/>
        <end position="42"/>
    </location>
</feature>
<feature type="region of interest" description="Required for endosomal and lysosomal localization and myristoylation" evidence="1">
    <location>
        <begin position="2"/>
        <end position="10"/>
    </location>
</feature>
<feature type="region of interest" description="Disordered" evidence="5">
    <location>
        <begin position="65"/>
        <end position="105"/>
    </location>
</feature>
<feature type="modified residue" description="Phosphoserine" evidence="2">
    <location>
        <position position="50"/>
    </location>
</feature>
<feature type="modified residue" description="Phosphoserine" evidence="12">
    <location>
        <position position="52"/>
    </location>
</feature>
<feature type="modified residue" description="Phosphoserine" evidence="12">
    <location>
        <position position="53"/>
    </location>
</feature>
<feature type="modified residue" description="Phosphotyrosine" evidence="2">
    <location>
        <position position="103"/>
    </location>
</feature>
<feature type="modified residue" description="Phosphoserine" evidence="2">
    <location>
        <position position="123"/>
    </location>
</feature>
<feature type="lipid moiety-binding region" description="N-myristoyl glycine" evidence="2">
    <location>
        <position position="2"/>
    </location>
</feature>
<feature type="mutagenesis site" description="Delays neurite degeneration and inhibits DPYSL2/CRMP2 phosphorylation." evidence="8">
    <original>C</original>
    <variation>A</variation>
    <location>
        <position position="145"/>
    </location>
</feature>
<feature type="mutagenesis site" description="Dominant negative mutant; can prevent Wallerian degeneration when overexpressed." evidence="7 8">
    <original>C</original>
    <variation>A</variation>
    <location>
        <position position="184"/>
    </location>
</feature>
<name>ZNRF1_MOUSE</name>
<accession>Q91V17</accession>
<accession>Q8C5D7</accession>
<gene>
    <name type="primary">Znrf1</name>
    <name type="synonym">Nin283</name>
</gene>
<reference key="1">
    <citation type="journal article" date="2001" name="J. Biol. Chem.">
        <title>Identification of genes induced in peripheral nerve after injury. Expression profiling and novel gene discovery.</title>
        <authorList>
            <person name="Araki T."/>
            <person name="Nagarajan R."/>
            <person name="Milbrandt J."/>
        </authorList>
    </citation>
    <scope>NUCLEOTIDE SEQUENCE [MRNA]</scope>
    <scope>SUBCELLULAR LOCATION</scope>
</reference>
<reference key="2">
    <citation type="journal article" date="2005" name="Science">
        <title>The transcriptional landscape of the mammalian genome.</title>
        <authorList>
            <person name="Carninci P."/>
            <person name="Kasukawa T."/>
            <person name="Katayama S."/>
            <person name="Gough J."/>
            <person name="Frith M.C."/>
            <person name="Maeda N."/>
            <person name="Oyama R."/>
            <person name="Ravasi T."/>
            <person name="Lenhard B."/>
            <person name="Wells C."/>
            <person name="Kodzius R."/>
            <person name="Shimokawa K."/>
            <person name="Bajic V.B."/>
            <person name="Brenner S.E."/>
            <person name="Batalov S."/>
            <person name="Forrest A.R."/>
            <person name="Zavolan M."/>
            <person name="Davis M.J."/>
            <person name="Wilming L.G."/>
            <person name="Aidinis V."/>
            <person name="Allen J.E."/>
            <person name="Ambesi-Impiombato A."/>
            <person name="Apweiler R."/>
            <person name="Aturaliya R.N."/>
            <person name="Bailey T.L."/>
            <person name="Bansal M."/>
            <person name="Baxter L."/>
            <person name="Beisel K.W."/>
            <person name="Bersano T."/>
            <person name="Bono H."/>
            <person name="Chalk A.M."/>
            <person name="Chiu K.P."/>
            <person name="Choudhary V."/>
            <person name="Christoffels A."/>
            <person name="Clutterbuck D.R."/>
            <person name="Crowe M.L."/>
            <person name="Dalla E."/>
            <person name="Dalrymple B.P."/>
            <person name="de Bono B."/>
            <person name="Della Gatta G."/>
            <person name="di Bernardo D."/>
            <person name="Down T."/>
            <person name="Engstrom P."/>
            <person name="Fagiolini M."/>
            <person name="Faulkner G."/>
            <person name="Fletcher C.F."/>
            <person name="Fukushima T."/>
            <person name="Furuno M."/>
            <person name="Futaki S."/>
            <person name="Gariboldi M."/>
            <person name="Georgii-Hemming P."/>
            <person name="Gingeras T.R."/>
            <person name="Gojobori T."/>
            <person name="Green R.E."/>
            <person name="Gustincich S."/>
            <person name="Harbers M."/>
            <person name="Hayashi Y."/>
            <person name="Hensch T.K."/>
            <person name="Hirokawa N."/>
            <person name="Hill D."/>
            <person name="Huminiecki L."/>
            <person name="Iacono M."/>
            <person name="Ikeo K."/>
            <person name="Iwama A."/>
            <person name="Ishikawa T."/>
            <person name="Jakt M."/>
            <person name="Kanapin A."/>
            <person name="Katoh M."/>
            <person name="Kawasawa Y."/>
            <person name="Kelso J."/>
            <person name="Kitamura H."/>
            <person name="Kitano H."/>
            <person name="Kollias G."/>
            <person name="Krishnan S.P."/>
            <person name="Kruger A."/>
            <person name="Kummerfeld S.K."/>
            <person name="Kurochkin I.V."/>
            <person name="Lareau L.F."/>
            <person name="Lazarevic D."/>
            <person name="Lipovich L."/>
            <person name="Liu J."/>
            <person name="Liuni S."/>
            <person name="McWilliam S."/>
            <person name="Madan Babu M."/>
            <person name="Madera M."/>
            <person name="Marchionni L."/>
            <person name="Matsuda H."/>
            <person name="Matsuzawa S."/>
            <person name="Miki H."/>
            <person name="Mignone F."/>
            <person name="Miyake S."/>
            <person name="Morris K."/>
            <person name="Mottagui-Tabar S."/>
            <person name="Mulder N."/>
            <person name="Nakano N."/>
            <person name="Nakauchi H."/>
            <person name="Ng P."/>
            <person name="Nilsson R."/>
            <person name="Nishiguchi S."/>
            <person name="Nishikawa S."/>
            <person name="Nori F."/>
            <person name="Ohara O."/>
            <person name="Okazaki Y."/>
            <person name="Orlando V."/>
            <person name="Pang K.C."/>
            <person name="Pavan W.J."/>
            <person name="Pavesi G."/>
            <person name="Pesole G."/>
            <person name="Petrovsky N."/>
            <person name="Piazza S."/>
            <person name="Reed J."/>
            <person name="Reid J.F."/>
            <person name="Ring B.Z."/>
            <person name="Ringwald M."/>
            <person name="Rost B."/>
            <person name="Ruan Y."/>
            <person name="Salzberg S.L."/>
            <person name="Sandelin A."/>
            <person name="Schneider C."/>
            <person name="Schoenbach C."/>
            <person name="Sekiguchi K."/>
            <person name="Semple C.A."/>
            <person name="Seno S."/>
            <person name="Sessa L."/>
            <person name="Sheng Y."/>
            <person name="Shibata Y."/>
            <person name="Shimada H."/>
            <person name="Shimada K."/>
            <person name="Silva D."/>
            <person name="Sinclair B."/>
            <person name="Sperling S."/>
            <person name="Stupka E."/>
            <person name="Sugiura K."/>
            <person name="Sultana R."/>
            <person name="Takenaka Y."/>
            <person name="Taki K."/>
            <person name="Tammoja K."/>
            <person name="Tan S.L."/>
            <person name="Tang S."/>
            <person name="Taylor M.S."/>
            <person name="Tegner J."/>
            <person name="Teichmann S.A."/>
            <person name="Ueda H.R."/>
            <person name="van Nimwegen E."/>
            <person name="Verardo R."/>
            <person name="Wei C.L."/>
            <person name="Yagi K."/>
            <person name="Yamanishi H."/>
            <person name="Zabarovsky E."/>
            <person name="Zhu S."/>
            <person name="Zimmer A."/>
            <person name="Hide W."/>
            <person name="Bult C."/>
            <person name="Grimmond S.M."/>
            <person name="Teasdale R.D."/>
            <person name="Liu E.T."/>
            <person name="Brusic V."/>
            <person name="Quackenbush J."/>
            <person name="Wahlestedt C."/>
            <person name="Mattick J.S."/>
            <person name="Hume D.A."/>
            <person name="Kai C."/>
            <person name="Sasaki D."/>
            <person name="Tomaru Y."/>
            <person name="Fukuda S."/>
            <person name="Kanamori-Katayama M."/>
            <person name="Suzuki M."/>
            <person name="Aoki J."/>
            <person name="Arakawa T."/>
            <person name="Iida J."/>
            <person name="Imamura K."/>
            <person name="Itoh M."/>
            <person name="Kato T."/>
            <person name="Kawaji H."/>
            <person name="Kawagashira N."/>
            <person name="Kawashima T."/>
            <person name="Kojima M."/>
            <person name="Kondo S."/>
            <person name="Konno H."/>
            <person name="Nakano K."/>
            <person name="Ninomiya N."/>
            <person name="Nishio T."/>
            <person name="Okada M."/>
            <person name="Plessy C."/>
            <person name="Shibata K."/>
            <person name="Shiraki T."/>
            <person name="Suzuki S."/>
            <person name="Tagami M."/>
            <person name="Waki K."/>
            <person name="Watahiki A."/>
            <person name="Okamura-Oho Y."/>
            <person name="Suzuki H."/>
            <person name="Kawai J."/>
            <person name="Hayashizaki Y."/>
        </authorList>
    </citation>
    <scope>NUCLEOTIDE SEQUENCE [LARGE SCALE MRNA]</scope>
    <source>
        <strain>C57BL/6J</strain>
        <tissue>Cerebellum</tissue>
        <tissue>Lung</tissue>
    </source>
</reference>
<reference key="3">
    <citation type="journal article" date="2004" name="Genome Res.">
        <title>The status, quality, and expansion of the NIH full-length cDNA project: the Mammalian Gene Collection (MGC).</title>
        <authorList>
            <consortium name="The MGC Project Team"/>
        </authorList>
    </citation>
    <scope>NUCLEOTIDE SEQUENCE [LARGE SCALE MRNA]</scope>
    <source>
        <strain>C57BL/6J</strain>
        <strain>FVB/N</strain>
        <tissue>Mammary tumor</tissue>
    </source>
</reference>
<reference key="4">
    <citation type="journal article" date="2003" name="J. Neurosci.">
        <title>ZNRF proteins constitute a family of presynaptic E3 ubiquitin ligases.</title>
        <authorList>
            <person name="Araki T."/>
            <person name="Milbrandt J."/>
        </authorList>
    </citation>
    <scope>TISSUE SPECIFICITY</scope>
    <scope>SUBCELLULAR LOCATION</scope>
</reference>
<reference key="5">
    <citation type="journal article" date="2009" name="Biochem. Biophys. Res. Commun.">
        <title>ZNRF1 interacts with tubulin and regulates cell morphogenesis.</title>
        <authorList>
            <person name="Yoshida K."/>
            <person name="Watanabe M."/>
            <person name="Hatakeyama S."/>
        </authorList>
    </citation>
    <scope>INTERACTION WITH TUBB2A</scope>
</reference>
<reference key="6">
    <citation type="journal article" date="2010" name="Cell">
        <title>A tissue-specific atlas of mouse protein phosphorylation and expression.</title>
        <authorList>
            <person name="Huttlin E.L."/>
            <person name="Jedrychowski M.P."/>
            <person name="Elias J.E."/>
            <person name="Goswami T."/>
            <person name="Rad R."/>
            <person name="Beausoleil S.A."/>
            <person name="Villen J."/>
            <person name="Haas W."/>
            <person name="Sowa M.E."/>
            <person name="Gygi S.P."/>
        </authorList>
    </citation>
    <scope>PHOSPHORYLATION [LARGE SCALE ANALYSIS] AT SER-52 AND SER-53</scope>
    <scope>IDENTIFICATION BY MASS SPECTROMETRY [LARGE SCALE ANALYSIS]</scope>
    <source>
        <tissue>Lung</tissue>
    </source>
</reference>
<reference key="7">
    <citation type="journal article" date="2010" name="J. Neurosci.">
        <title>Proteasomal degradation of glutamine synthetase regulates schwann cell differentiation.</title>
        <authorList>
            <person name="Saitoh F."/>
            <person name="Araki T."/>
        </authorList>
    </citation>
    <scope>FUNCTION</scope>
    <scope>INTERACTION WITH GLUL</scope>
    <scope>MUTAGENESIS OF CYS-184</scope>
</reference>
<reference key="8">
    <citation type="journal article" date="2011" name="Nat. Cell Biol.">
        <title>ZNRF1 promotes Wallerian degeneration by degrading AKT to induce GSK3B-dependent CRMP2 phosphorylation.</title>
        <authorList>
            <person name="Wakatsuki S."/>
            <person name="Saitoh F."/>
            <person name="Araki T."/>
        </authorList>
    </citation>
    <scope>FUNCTION</scope>
    <scope>INTERACTION WITH AKT1</scope>
    <scope>MUTAGENESIS OF CYS-145 AND CYS-184</scope>
</reference>
<reference key="9">
    <citation type="journal article" date="2017" name="Nat. Commun.">
        <title>The ubiquitin ligase ZNRF1 promotes caveolin-1 ubiquitination and degradation to modulate inflammation.</title>
        <authorList>
            <person name="Lee C.Y."/>
            <person name="Lai T.Y."/>
            <person name="Tsai M.K."/>
            <person name="Chang Y.C."/>
            <person name="Ho Y.H."/>
            <person name="Yu I.S."/>
            <person name="Yeh T.W."/>
            <person name="Chou C.C."/>
            <person name="Lin Y.S."/>
            <person name="Lawrence T."/>
            <person name="Hsu L.C."/>
        </authorList>
    </citation>
    <scope>FUNCTION</scope>
    <scope>DISRUPTION PHENOTYPE</scope>
</reference>
<reference key="10">
    <citation type="journal article" date="2023" name="J. Exp. Med.">
        <title>The Src-ZNRF1 axis controls TLR3 trafficking and interferon responses to limit lung barrier damage.</title>
        <authorList>
            <person name="Lin Y.S."/>
            <person name="Chang Y.C."/>
            <person name="Chao T.L."/>
            <person name="Tsai Y.M."/>
            <person name="Jhuang S.J."/>
            <person name="Ho Y.H."/>
            <person name="Lai T.Y."/>
            <person name="Liu Y.L."/>
            <person name="Chen C.Y."/>
            <person name="Tsai C.Y."/>
            <person name="Hsueh Y.P."/>
            <person name="Chang S.Y."/>
            <person name="Chuang T.H."/>
            <person name="Lee C.Y."/>
            <person name="Hsu L.C."/>
        </authorList>
    </citation>
    <scope>FUNCTION</scope>
    <scope>DISRUPTION PHENOTYPE</scope>
</reference>
<sequence>MGGKQSTAARSRGPFPGVSTDDSAVPPPGGAPHFGHYRTGGGAMGLRSRSVSSVAGMGMDPSTAGGVPFSLYTPASRGTGDSERAPGGGGSTSDSTYAHGNGYQETGGGHHRDGMLYLGSRASLADALPLHIAPRWFSSHSGFKCPICSKSVASDEMEMHFIMCLSKPRLSYNDDVLTKDAGECVICLEELLQGDTIARLPCLCIYHKSCIDSWFEVNRSCPEHPAD</sequence>
<protein>
    <recommendedName>
        <fullName>E3 ubiquitin-protein ligase ZNRF1</fullName>
        <ecNumber>2.3.2.27</ecNumber>
    </recommendedName>
    <alternativeName>
        <fullName>Nerve injury-induced gene 283 protein</fullName>
    </alternativeName>
    <alternativeName>
        <fullName>RING-type E3 ubiquitin transferase ZNRF1</fullName>
    </alternativeName>
    <alternativeName>
        <fullName>Zinc/RING finger protein 1</fullName>
    </alternativeName>
</protein>